<proteinExistence type="evidence at protein level"/>
<evidence type="ECO:0000250" key="1">
    <source>
        <dbReference type="UniProtKB" id="P0AEZ1"/>
    </source>
</evidence>
<evidence type="ECO:0000269" key="2">
    <source ref="3"/>
</evidence>
<evidence type="ECO:0000303" key="3">
    <source ref="3"/>
</evidence>
<evidence type="ECO:0000305" key="4"/>
<evidence type="ECO:0000312" key="5">
    <source>
        <dbReference type="EMBL" id="BAK65950.1"/>
    </source>
</evidence>
<evidence type="ECO:0007829" key="6">
    <source>
        <dbReference type="PDB" id="7XG9"/>
    </source>
</evidence>
<evidence type="ECO:0007829" key="7">
    <source>
        <dbReference type="PDB" id="7XLF"/>
    </source>
</evidence>
<feature type="chain" id="PRO_0000447132" description="5,10-methylenetetrahydrofolate reductase">
    <location>
        <begin position="1"/>
        <end position="288"/>
    </location>
</feature>
<feature type="binding site" evidence="1">
    <location>
        <position position="51"/>
    </location>
    <ligand>
        <name>FAD</name>
        <dbReference type="ChEBI" id="CHEBI:57692"/>
    </ligand>
</feature>
<feature type="binding site" evidence="1">
    <location>
        <position position="73"/>
    </location>
    <ligand>
        <name>FAD</name>
        <dbReference type="ChEBI" id="CHEBI:57692"/>
    </ligand>
</feature>
<feature type="binding site" evidence="1">
    <location>
        <position position="106"/>
    </location>
    <ligand>
        <name>FAD</name>
        <dbReference type="ChEBI" id="CHEBI:57692"/>
    </ligand>
</feature>
<feature type="binding site" evidence="1">
    <location>
        <position position="107"/>
    </location>
    <ligand>
        <name>(6S)-5-methyl-5,6,7,8-tetrahydrofolate</name>
        <dbReference type="ChEBI" id="CHEBI:18608"/>
    </ligand>
</feature>
<feature type="binding site" evidence="1">
    <location>
        <position position="107"/>
    </location>
    <ligand>
        <name>FAD</name>
        <dbReference type="ChEBI" id="CHEBI:57692"/>
    </ligand>
</feature>
<feature type="binding site" evidence="1">
    <location>
        <position position="118"/>
    </location>
    <ligand>
        <name>FAD</name>
        <dbReference type="ChEBI" id="CHEBI:57692"/>
    </ligand>
</feature>
<feature type="binding site" evidence="1">
    <location>
        <position position="140"/>
    </location>
    <ligand>
        <name>FAD</name>
        <dbReference type="ChEBI" id="CHEBI:57692"/>
    </ligand>
</feature>
<feature type="binding site" evidence="1">
    <location>
        <position position="144"/>
    </location>
    <ligand>
        <name>FAD</name>
        <dbReference type="ChEBI" id="CHEBI:57692"/>
    </ligand>
</feature>
<feature type="binding site" evidence="1">
    <location>
        <position position="159"/>
    </location>
    <ligand>
        <name>FAD</name>
        <dbReference type="ChEBI" id="CHEBI:57692"/>
    </ligand>
</feature>
<feature type="binding site" evidence="1">
    <location>
        <position position="175"/>
    </location>
    <ligand>
        <name>(6S)-5-methyl-5,6,7,8-tetrahydrofolate</name>
        <dbReference type="ChEBI" id="CHEBI:18608"/>
    </ligand>
</feature>
<feature type="binding site" evidence="1">
    <location>
        <position position="175"/>
    </location>
    <ligand>
        <name>NADH</name>
        <dbReference type="ChEBI" id="CHEBI:57945"/>
    </ligand>
</feature>
<feature type="helix" evidence="6">
    <location>
        <begin position="4"/>
        <end position="15"/>
    </location>
</feature>
<feature type="strand" evidence="6">
    <location>
        <begin position="19"/>
        <end position="22"/>
    </location>
</feature>
<feature type="helix" evidence="7">
    <location>
        <begin position="24"/>
        <end position="26"/>
    </location>
</feature>
<feature type="helix" evidence="6">
    <location>
        <begin position="27"/>
        <end position="33"/>
    </location>
</feature>
<feature type="helix" evidence="6">
    <location>
        <begin position="34"/>
        <end position="36"/>
    </location>
</feature>
<feature type="strand" evidence="6">
    <location>
        <begin position="42"/>
        <end position="45"/>
    </location>
</feature>
<feature type="helix" evidence="6">
    <location>
        <begin position="53"/>
        <end position="65"/>
    </location>
</feature>
<feature type="strand" evidence="6">
    <location>
        <begin position="69"/>
        <end position="75"/>
    </location>
</feature>
<feature type="helix" evidence="6">
    <location>
        <begin position="76"/>
        <end position="78"/>
    </location>
</feature>
<feature type="helix" evidence="6">
    <location>
        <begin position="82"/>
        <end position="93"/>
    </location>
</feature>
<feature type="strand" evidence="6">
    <location>
        <begin position="100"/>
        <end position="104"/>
    </location>
</feature>
<feature type="strand" evidence="6">
    <location>
        <begin position="112"/>
        <end position="114"/>
    </location>
</feature>
<feature type="helix" evidence="6">
    <location>
        <begin position="118"/>
        <end position="122"/>
    </location>
</feature>
<feature type="helix" evidence="6">
    <location>
        <begin position="126"/>
        <end position="129"/>
    </location>
</feature>
<feature type="strand" evidence="6">
    <location>
        <begin position="134"/>
        <end position="139"/>
    </location>
</feature>
<feature type="strand" evidence="6">
    <location>
        <begin position="145"/>
        <end position="147"/>
    </location>
</feature>
<feature type="helix" evidence="6">
    <location>
        <begin position="149"/>
        <end position="165"/>
    </location>
</feature>
<feature type="strand" evidence="6">
    <location>
        <begin position="169"/>
        <end position="174"/>
    </location>
</feature>
<feature type="strand" evidence="6">
    <location>
        <begin position="178"/>
        <end position="180"/>
    </location>
</feature>
<feature type="helix" evidence="6">
    <location>
        <begin position="181"/>
        <end position="192"/>
    </location>
</feature>
<feature type="strand" evidence="6">
    <location>
        <begin position="199"/>
        <end position="204"/>
    </location>
</feature>
<feature type="strand" evidence="6">
    <location>
        <begin position="206"/>
        <end position="208"/>
    </location>
</feature>
<feature type="helix" evidence="6">
    <location>
        <begin position="209"/>
        <end position="219"/>
    </location>
</feature>
<feature type="helix" evidence="6">
    <location>
        <begin position="225"/>
        <end position="231"/>
    </location>
</feature>
<feature type="helix" evidence="6">
    <location>
        <begin position="245"/>
        <end position="254"/>
    </location>
</feature>
<feature type="helix" evidence="6">
    <location>
        <begin position="257"/>
        <end position="259"/>
    </location>
</feature>
<feature type="strand" evidence="6">
    <location>
        <begin position="261"/>
        <end position="267"/>
    </location>
</feature>
<feature type="helix" evidence="6">
    <location>
        <begin position="272"/>
        <end position="285"/>
    </location>
</feature>
<comment type="function">
    <text evidence="1 2">Catalyzes the NADH-dependent reduction of 5,10-methylenetetrahydrofolate to 5-methyltetrahydrofolate. Is required to provide the methyl group necessary for methionine synthetase to convert homocysteine to methionine; the methyl group is given by 5-methyltetrahydrofolate (By similarity). Is required for Sphingobium SYK-6 to grow on vanillate or syringate as the sole source of carbon (Ref.3).</text>
</comment>
<comment type="catalytic activity">
    <reaction evidence="1">
        <text>(6S)-5-methyl-5,6,7,8-tetrahydrofolate + NAD(+) = (6R)-5,10-methylene-5,6,7,8-tetrahydrofolate + NADH + H(+)</text>
        <dbReference type="Rhea" id="RHEA:19821"/>
        <dbReference type="ChEBI" id="CHEBI:15378"/>
        <dbReference type="ChEBI" id="CHEBI:15636"/>
        <dbReference type="ChEBI" id="CHEBI:18608"/>
        <dbReference type="ChEBI" id="CHEBI:57540"/>
        <dbReference type="ChEBI" id="CHEBI:57945"/>
        <dbReference type="EC" id="1.5.1.54"/>
    </reaction>
    <physiologicalReaction direction="right-to-left" evidence="1">
        <dbReference type="Rhea" id="RHEA:19823"/>
    </physiologicalReaction>
</comment>
<comment type="cofactor">
    <cofactor evidence="1">
        <name>FAD</name>
        <dbReference type="ChEBI" id="CHEBI:57692"/>
    </cofactor>
</comment>
<comment type="pathway">
    <text evidence="1">One-carbon metabolism; tetrahydrofolate interconversion.</text>
</comment>
<comment type="pathway">
    <text evidence="1">Amino-acid biosynthesis; L-methionine biosynthesis via de novo pathway.</text>
</comment>
<comment type="disruption phenotype">
    <text evidence="2">Mutant cannot grow on vanillate or syringate as the sole source of carbon. Mutant retains vanillate and syringate O-demethylation activity, but accumulates methyl-tetrahydrofolate as a result of the THF-dependent O-demethylation of those compounds.</text>
</comment>
<comment type="similarity">
    <text evidence="4">Belongs to the methylenetetrahydrofolate reductase family.</text>
</comment>
<organism>
    <name type="scientific">Sphingobium sp. (strain NBRC 103272 / SYK-6)</name>
    <dbReference type="NCBI Taxonomy" id="627192"/>
    <lineage>
        <taxon>Bacteria</taxon>
        <taxon>Pseudomonadati</taxon>
        <taxon>Pseudomonadota</taxon>
        <taxon>Alphaproteobacteria</taxon>
        <taxon>Sphingomonadales</taxon>
        <taxon>Sphingomonadaceae</taxon>
        <taxon>Sphingobium</taxon>
    </lineage>
</organism>
<name>METF_SPHSK</name>
<reference key="1">
    <citation type="journal article" date="2005" name="J. Bacteriol.">
        <title>A tetrahydrofolate-dependent O-demethylase, LigM, is crucial for catabolism of vanillate and syringate in Sphingomonas paucimobilis SYK-6.</title>
        <authorList>
            <person name="Abe T."/>
            <person name="Masai E."/>
            <person name="Miyauchi K."/>
            <person name="Katayama Y."/>
            <person name="Fukuda M."/>
        </authorList>
    </citation>
    <scope>NUCLEOTIDE SEQUENCE [GENOMIC DNA]</scope>
    <source>
        <strain>NBRC 103272 / SYK-6</strain>
    </source>
</reference>
<reference key="2">
    <citation type="journal article" date="2012" name="J. Bacteriol.">
        <title>Complete genome sequence of Sphingobium sp. strain SYK-6, a degrader of lignin-derived biaryls and monoaryls.</title>
        <authorList>
            <person name="Masai E."/>
            <person name="Kamimura N."/>
            <person name="Kasai D."/>
            <person name="Oguchi A."/>
            <person name="Ankai A."/>
            <person name="Fukui S."/>
            <person name="Takahashi M."/>
            <person name="Yashiro I."/>
            <person name="Sasaki H."/>
            <person name="Harada T."/>
            <person name="Nakamura S."/>
            <person name="Katano Y."/>
            <person name="Narita-Yamada S."/>
            <person name="Nakazawa H."/>
            <person name="Hara H."/>
            <person name="Katayama Y."/>
            <person name="Fukuda M."/>
            <person name="Yamazaki S."/>
            <person name="Fujita N."/>
        </authorList>
    </citation>
    <scope>NUCLEOTIDE SEQUENCE [LARGE SCALE GENOMIC DNA]</scope>
    <source>
        <strain>NBRC 103272 / SYK-6</strain>
    </source>
</reference>
<reference key="3">
    <citation type="journal article" date="2002" name="J. Wood Sci.">
        <title>Tetrahydrofolate-dependent vanillate and syringate O-demethylation links tightly to one-carbon metabolic pathway associated with amino acid synthesis and DNA methylation in the lignin metabolism of Sphingomonas paucimobilis SYK-6.</title>
        <authorList>
            <person name="Sonoki T."/>
            <person name="Otsuka Y."/>
            <person name="Ikeda S."/>
            <person name="Masai E."/>
            <person name="Kajita S."/>
            <person name="Katayama Y."/>
        </authorList>
        <dbReference type="AGRICOLA" id="IND23303201"/>
    </citation>
    <scope>FUNCTION</scope>
    <scope>DISRUPTION PHENOTYPE</scope>
    <source>
        <strain>NBRC 103272 / SYK-6</strain>
    </source>
</reference>
<dbReference type="EC" id="1.5.1.54" evidence="1"/>
<dbReference type="EMBL" id="AB186750">
    <property type="protein sequence ID" value="BAD61060.1"/>
    <property type="molecule type" value="Genomic_DNA"/>
</dbReference>
<dbReference type="EMBL" id="AP012222">
    <property type="protein sequence ID" value="BAK65950.1"/>
    <property type="molecule type" value="Genomic_DNA"/>
</dbReference>
<dbReference type="RefSeq" id="WP_014075601.1">
    <property type="nucleotide sequence ID" value="NC_015976.1"/>
</dbReference>
<dbReference type="PDB" id="7XG9">
    <property type="method" value="X-ray"/>
    <property type="resolution" value="1.50 A"/>
    <property type="chains" value="A/B=2-288"/>
</dbReference>
<dbReference type="PDB" id="7XLF">
    <property type="method" value="X-ray"/>
    <property type="resolution" value="1.85 A"/>
    <property type="chains" value="A/B=2-288"/>
</dbReference>
<dbReference type="PDBsum" id="7XG9"/>
<dbReference type="PDBsum" id="7XLF"/>
<dbReference type="SMR" id="G2IQS8"/>
<dbReference type="STRING" id="627192.SLG_12750"/>
<dbReference type="KEGG" id="ssy:SLG_12750"/>
<dbReference type="eggNOG" id="COG0685">
    <property type="taxonomic scope" value="Bacteria"/>
</dbReference>
<dbReference type="HOGENOM" id="CLU_081788_0_0_5"/>
<dbReference type="OrthoDB" id="9812555at2"/>
<dbReference type="UniPathway" id="UPA00051"/>
<dbReference type="UniPathway" id="UPA00193"/>
<dbReference type="Proteomes" id="UP000001275">
    <property type="component" value="Chromosome"/>
</dbReference>
<dbReference type="GO" id="GO:0005829">
    <property type="term" value="C:cytosol"/>
    <property type="evidence" value="ECO:0007669"/>
    <property type="project" value="TreeGrafter"/>
</dbReference>
<dbReference type="GO" id="GO:0071949">
    <property type="term" value="F:FAD binding"/>
    <property type="evidence" value="ECO:0007669"/>
    <property type="project" value="TreeGrafter"/>
</dbReference>
<dbReference type="GO" id="GO:0106312">
    <property type="term" value="F:methylenetetrahydrofolate reductase (NADH) activity"/>
    <property type="evidence" value="ECO:0007669"/>
    <property type="project" value="RHEA"/>
</dbReference>
<dbReference type="GO" id="GO:0009086">
    <property type="term" value="P:methionine biosynthetic process"/>
    <property type="evidence" value="ECO:0007669"/>
    <property type="project" value="TreeGrafter"/>
</dbReference>
<dbReference type="GO" id="GO:0035999">
    <property type="term" value="P:tetrahydrofolate interconversion"/>
    <property type="evidence" value="ECO:0007669"/>
    <property type="project" value="UniProtKB-UniPathway"/>
</dbReference>
<dbReference type="Gene3D" id="3.20.20.220">
    <property type="match status" value="1"/>
</dbReference>
<dbReference type="InterPro" id="IPR029041">
    <property type="entry name" value="FAD-linked_oxidoreductase-like"/>
</dbReference>
<dbReference type="InterPro" id="IPR003171">
    <property type="entry name" value="Mehydrof_redctse-like"/>
</dbReference>
<dbReference type="PANTHER" id="PTHR45754">
    <property type="entry name" value="METHYLENETETRAHYDROFOLATE REDUCTASE"/>
    <property type="match status" value="1"/>
</dbReference>
<dbReference type="PANTHER" id="PTHR45754:SF3">
    <property type="entry name" value="METHYLENETETRAHYDROFOLATE REDUCTASE (NADPH)"/>
    <property type="match status" value="1"/>
</dbReference>
<dbReference type="Pfam" id="PF02219">
    <property type="entry name" value="MTHFR"/>
    <property type="match status" value="1"/>
</dbReference>
<dbReference type="SUPFAM" id="SSF51730">
    <property type="entry name" value="FAD-linked oxidoreductase"/>
    <property type="match status" value="1"/>
</dbReference>
<gene>
    <name evidence="3" type="primary">metF</name>
    <name evidence="5" type="ORF">SLG_12750</name>
</gene>
<sequence>MATATLDKAALSRLFTDYSLEITPKDVEALENAAHMIPPGTLISVTFLPGAEYEDRARAAKRIQELGFRPVPHLSARRLIDEADLRTYLDMLKGVIDLKHVFVIAGDPNEPLGIYEDALALIDSGILKEYGIEHCGISGYPEGHPDITDEKLAKAMHDKVASLKRQGIDYSIMTQFGFDAEPVLEWLKQIRSEGIDGPVRIGLAGPASIKTLLRFAARCGVGTSAKVVKKYGLSITSLIGSAGPDPVIEDLTPVLGPEHGQVHLHFYPFGGLVKTNEWIVNFKGKQGI</sequence>
<keyword id="KW-0002">3D-structure</keyword>
<keyword id="KW-0274">FAD</keyword>
<keyword id="KW-0285">Flavoprotein</keyword>
<keyword id="KW-0520">NAD</keyword>
<keyword id="KW-0560">Oxidoreductase</keyword>
<keyword id="KW-1185">Reference proteome</keyword>
<protein>
    <recommendedName>
        <fullName evidence="3">5,10-methylenetetrahydrofolate reductase</fullName>
        <ecNumber evidence="1">1.5.1.54</ecNumber>
    </recommendedName>
</protein>
<accession>G2IQS8</accession>
<accession>Q60FX0</accession>